<reference key="1">
    <citation type="journal article" date="2011" name="MBio">
        <title>Novel metabolic attributes of the genus Cyanothece, comprising a group of unicellular nitrogen-fixing Cyanobacteria.</title>
        <authorList>
            <person name="Bandyopadhyay A."/>
            <person name="Elvitigala T."/>
            <person name="Welsh E."/>
            <person name="Stockel J."/>
            <person name="Liberton M."/>
            <person name="Min H."/>
            <person name="Sherman L.A."/>
            <person name="Pakrasi H.B."/>
        </authorList>
    </citation>
    <scope>NUCLEOTIDE SEQUENCE [LARGE SCALE GENOMIC DNA]</scope>
    <source>
        <strain>PCC 7424</strain>
    </source>
</reference>
<protein>
    <recommendedName>
        <fullName evidence="1">Small ribosomal subunit protein uS11</fullName>
    </recommendedName>
    <alternativeName>
        <fullName evidence="2">30S ribosomal protein S11</fullName>
    </alternativeName>
</protein>
<sequence>MARPTKKGGAKKQKKNVPNGIAHIQSTFNNTIVTIADTRGDVISWASAGSSGFKGAKKGTPFAAQTAADNAARRAMEQGMRQIEVMVSGPGAGRETAIRALQGAGLEITLIRDVTPIPHNGCRPPKRRRV</sequence>
<keyword id="KW-1185">Reference proteome</keyword>
<keyword id="KW-0687">Ribonucleoprotein</keyword>
<keyword id="KW-0689">Ribosomal protein</keyword>
<keyword id="KW-0694">RNA-binding</keyword>
<keyword id="KW-0699">rRNA-binding</keyword>
<evidence type="ECO:0000255" key="1">
    <source>
        <dbReference type="HAMAP-Rule" id="MF_01310"/>
    </source>
</evidence>
<evidence type="ECO:0000305" key="2"/>
<dbReference type="EMBL" id="CP001291">
    <property type="protein sequence ID" value="ACK72107.1"/>
    <property type="molecule type" value="Genomic_DNA"/>
</dbReference>
<dbReference type="RefSeq" id="WP_015955699.1">
    <property type="nucleotide sequence ID" value="NC_011729.1"/>
</dbReference>
<dbReference type="SMR" id="B7KI10"/>
<dbReference type="STRING" id="65393.PCC7424_3726"/>
<dbReference type="KEGG" id="cyc:PCC7424_3726"/>
<dbReference type="eggNOG" id="COG0100">
    <property type="taxonomic scope" value="Bacteria"/>
</dbReference>
<dbReference type="HOGENOM" id="CLU_072439_5_0_3"/>
<dbReference type="OrthoDB" id="9806415at2"/>
<dbReference type="Proteomes" id="UP000002384">
    <property type="component" value="Chromosome"/>
</dbReference>
<dbReference type="GO" id="GO:1990904">
    <property type="term" value="C:ribonucleoprotein complex"/>
    <property type="evidence" value="ECO:0007669"/>
    <property type="project" value="UniProtKB-KW"/>
</dbReference>
<dbReference type="GO" id="GO:0005840">
    <property type="term" value="C:ribosome"/>
    <property type="evidence" value="ECO:0007669"/>
    <property type="project" value="UniProtKB-KW"/>
</dbReference>
<dbReference type="GO" id="GO:0019843">
    <property type="term" value="F:rRNA binding"/>
    <property type="evidence" value="ECO:0007669"/>
    <property type="project" value="UniProtKB-UniRule"/>
</dbReference>
<dbReference type="GO" id="GO:0003735">
    <property type="term" value="F:structural constituent of ribosome"/>
    <property type="evidence" value="ECO:0007669"/>
    <property type="project" value="InterPro"/>
</dbReference>
<dbReference type="GO" id="GO:0006412">
    <property type="term" value="P:translation"/>
    <property type="evidence" value="ECO:0007669"/>
    <property type="project" value="UniProtKB-UniRule"/>
</dbReference>
<dbReference type="FunFam" id="3.30.420.80:FF:000001">
    <property type="entry name" value="30S ribosomal protein S11"/>
    <property type="match status" value="1"/>
</dbReference>
<dbReference type="Gene3D" id="3.30.420.80">
    <property type="entry name" value="Ribosomal protein S11"/>
    <property type="match status" value="1"/>
</dbReference>
<dbReference type="HAMAP" id="MF_01310">
    <property type="entry name" value="Ribosomal_uS11"/>
    <property type="match status" value="1"/>
</dbReference>
<dbReference type="InterPro" id="IPR001971">
    <property type="entry name" value="Ribosomal_uS11"/>
</dbReference>
<dbReference type="InterPro" id="IPR019981">
    <property type="entry name" value="Ribosomal_uS11_bac-type"/>
</dbReference>
<dbReference type="InterPro" id="IPR018102">
    <property type="entry name" value="Ribosomal_uS11_CS"/>
</dbReference>
<dbReference type="InterPro" id="IPR036967">
    <property type="entry name" value="Ribosomal_uS11_sf"/>
</dbReference>
<dbReference type="NCBIfam" id="NF003698">
    <property type="entry name" value="PRK05309.1"/>
    <property type="match status" value="1"/>
</dbReference>
<dbReference type="NCBIfam" id="TIGR03632">
    <property type="entry name" value="uS11_bact"/>
    <property type="match status" value="1"/>
</dbReference>
<dbReference type="PANTHER" id="PTHR11759">
    <property type="entry name" value="40S RIBOSOMAL PROTEIN S14/30S RIBOSOMAL PROTEIN S11"/>
    <property type="match status" value="1"/>
</dbReference>
<dbReference type="Pfam" id="PF00411">
    <property type="entry name" value="Ribosomal_S11"/>
    <property type="match status" value="1"/>
</dbReference>
<dbReference type="PIRSF" id="PIRSF002131">
    <property type="entry name" value="Ribosomal_S11"/>
    <property type="match status" value="1"/>
</dbReference>
<dbReference type="SUPFAM" id="SSF53137">
    <property type="entry name" value="Translational machinery components"/>
    <property type="match status" value="1"/>
</dbReference>
<dbReference type="PROSITE" id="PS00054">
    <property type="entry name" value="RIBOSOMAL_S11"/>
    <property type="match status" value="1"/>
</dbReference>
<gene>
    <name evidence="1" type="primary">rpsK</name>
    <name evidence="1" type="synonym">rps11</name>
    <name type="ordered locus">PCC7424_3726</name>
</gene>
<proteinExistence type="inferred from homology"/>
<organism>
    <name type="scientific">Gloeothece citriformis (strain PCC 7424)</name>
    <name type="common">Cyanothece sp. (strain PCC 7424)</name>
    <dbReference type="NCBI Taxonomy" id="65393"/>
    <lineage>
        <taxon>Bacteria</taxon>
        <taxon>Bacillati</taxon>
        <taxon>Cyanobacteriota</taxon>
        <taxon>Cyanophyceae</taxon>
        <taxon>Oscillatoriophycideae</taxon>
        <taxon>Chroococcales</taxon>
        <taxon>Aphanothecaceae</taxon>
        <taxon>Gloeothece</taxon>
        <taxon>Gloeothece citriformis</taxon>
    </lineage>
</organism>
<name>RS11_GLOC7</name>
<feature type="chain" id="PRO_1000141079" description="Small ribosomal subunit protein uS11">
    <location>
        <begin position="1"/>
        <end position="130"/>
    </location>
</feature>
<accession>B7KI10</accession>
<comment type="function">
    <text evidence="1">Located on the platform of the 30S subunit, it bridges several disparate RNA helices of the 16S rRNA. Forms part of the Shine-Dalgarno cleft in the 70S ribosome.</text>
</comment>
<comment type="subunit">
    <text evidence="1">Part of the 30S ribosomal subunit. Interacts with proteins S7 and S18. Binds to IF-3.</text>
</comment>
<comment type="similarity">
    <text evidence="1">Belongs to the universal ribosomal protein uS11 family.</text>
</comment>